<sequence>MIQYIKGDLFTHAIPAGKKVILAHACNTHGSWGGGIAAVFRKKFPKSNNEYSQYCHKNSNLLGTSFIIESDQPNILIACLFTSDFNQTPEQIVHFTKQSIADLARKVSDYKEVEKCDGKVAINMPKINAGIFGVPWEDTESALQEFDNLHFNVYVI</sequence>
<accession>Q5A1V3</accession>
<accession>A0A1D8PN47</accession>
<accession>Q5A1P5</accession>
<comment type="function">
    <text evidence="1">Highly specific phosphatase involved in the metabolism of ADP-ribose 1''-phosphate (Appr1p) which is produced as a consequence of tRNA splicing.</text>
</comment>
<comment type="catalytic activity">
    <reaction>
        <text>ADP-alpha-D-ribose 1''-phosphate + H2O = ADP-D-ribose + phosphate</text>
        <dbReference type="Rhea" id="RHEA:25029"/>
        <dbReference type="ChEBI" id="CHEBI:15377"/>
        <dbReference type="ChEBI" id="CHEBI:43474"/>
        <dbReference type="ChEBI" id="CHEBI:57967"/>
        <dbReference type="ChEBI" id="CHEBI:58753"/>
        <dbReference type="EC" id="3.1.3.84"/>
    </reaction>
</comment>
<comment type="similarity">
    <text evidence="3">Belongs to the POA1 family.</text>
</comment>
<evidence type="ECO:0000250" key="1"/>
<evidence type="ECO:0000255" key="2">
    <source>
        <dbReference type="PROSITE-ProRule" id="PRU00490"/>
    </source>
</evidence>
<evidence type="ECO:0000305" key="3"/>
<keyword id="KW-0378">Hydrolase</keyword>
<keyword id="KW-0904">Protein phosphatase</keyword>
<keyword id="KW-1185">Reference proteome</keyword>
<organism>
    <name type="scientific">Candida albicans (strain SC5314 / ATCC MYA-2876)</name>
    <name type="common">Yeast</name>
    <dbReference type="NCBI Taxonomy" id="237561"/>
    <lineage>
        <taxon>Eukaryota</taxon>
        <taxon>Fungi</taxon>
        <taxon>Dikarya</taxon>
        <taxon>Ascomycota</taxon>
        <taxon>Saccharomycotina</taxon>
        <taxon>Pichiomycetes</taxon>
        <taxon>Debaryomycetaceae</taxon>
        <taxon>Candida/Lodderomyces clade</taxon>
        <taxon>Candida</taxon>
    </lineage>
</organism>
<feature type="chain" id="PRO_0000324904" description="ADP-ribose 1''-phosphate phosphatase">
    <location>
        <begin position="1"/>
        <end position="156"/>
    </location>
</feature>
<feature type="domain" description="Macro" evidence="2">
    <location>
        <begin position="1"/>
        <end position="156"/>
    </location>
</feature>
<feature type="binding site" evidence="1">
    <location>
        <begin position="7"/>
        <end position="9"/>
    </location>
    <ligand>
        <name>substrate</name>
    </ligand>
</feature>
<feature type="binding site" evidence="1">
    <location>
        <begin position="25"/>
        <end position="27"/>
    </location>
    <ligand>
        <name>substrate</name>
    </ligand>
</feature>
<feature type="binding site" evidence="1">
    <location>
        <begin position="32"/>
        <end position="37"/>
    </location>
    <ligand>
        <name>substrate</name>
    </ligand>
</feature>
<feature type="binding site" evidence="1">
    <location>
        <begin position="127"/>
        <end position="133"/>
    </location>
    <ligand>
        <name>substrate</name>
    </ligand>
</feature>
<reference key="1">
    <citation type="journal article" date="2004" name="Proc. Natl. Acad. Sci. U.S.A.">
        <title>The diploid genome sequence of Candida albicans.</title>
        <authorList>
            <person name="Jones T."/>
            <person name="Federspiel N.A."/>
            <person name="Chibana H."/>
            <person name="Dungan J."/>
            <person name="Kalman S."/>
            <person name="Magee B.B."/>
            <person name="Newport G."/>
            <person name="Thorstenson Y.R."/>
            <person name="Agabian N."/>
            <person name="Magee P.T."/>
            <person name="Davis R.W."/>
            <person name="Scherer S."/>
        </authorList>
    </citation>
    <scope>NUCLEOTIDE SEQUENCE [LARGE SCALE GENOMIC DNA]</scope>
    <source>
        <strain>SC5314 / ATCC MYA-2876</strain>
    </source>
</reference>
<reference key="2">
    <citation type="journal article" date="2007" name="Genome Biol.">
        <title>Assembly of the Candida albicans genome into sixteen supercontigs aligned on the eight chromosomes.</title>
        <authorList>
            <person name="van het Hoog M."/>
            <person name="Rast T.J."/>
            <person name="Martchenko M."/>
            <person name="Grindle S."/>
            <person name="Dignard D."/>
            <person name="Hogues H."/>
            <person name="Cuomo C."/>
            <person name="Berriman M."/>
            <person name="Scherer S."/>
            <person name="Magee B.B."/>
            <person name="Whiteway M."/>
            <person name="Chibana H."/>
            <person name="Nantel A."/>
            <person name="Magee P.T."/>
        </authorList>
    </citation>
    <scope>GENOME REANNOTATION</scope>
    <source>
        <strain>SC5314 / ATCC MYA-2876</strain>
    </source>
</reference>
<reference key="3">
    <citation type="journal article" date="2013" name="Genome Biol.">
        <title>Assembly of a phased diploid Candida albicans genome facilitates allele-specific measurements and provides a simple model for repeat and indel structure.</title>
        <authorList>
            <person name="Muzzey D."/>
            <person name="Schwartz K."/>
            <person name="Weissman J.S."/>
            <person name="Sherlock G."/>
        </authorList>
    </citation>
    <scope>NUCLEOTIDE SEQUENCE [LARGE SCALE GENOMIC DNA]</scope>
    <scope>GENOME REANNOTATION</scope>
    <source>
        <strain>SC5314 / ATCC MYA-2876</strain>
    </source>
</reference>
<dbReference type="EC" id="3.1.3.84"/>
<dbReference type="EMBL" id="CP017627">
    <property type="protein sequence ID" value="AOW29555.1"/>
    <property type="molecule type" value="Genomic_DNA"/>
</dbReference>
<dbReference type="RefSeq" id="XP_715713.2">
    <property type="nucleotide sequence ID" value="XM_710620.2"/>
</dbReference>
<dbReference type="SMR" id="Q5A1V3"/>
<dbReference type="FunCoup" id="Q5A1V3">
    <property type="interactions" value="9"/>
</dbReference>
<dbReference type="EnsemblFungi" id="C5_01200W_A-T">
    <property type="protein sequence ID" value="C5_01200W_A-T-p1"/>
    <property type="gene ID" value="C5_01200W_A"/>
</dbReference>
<dbReference type="GeneID" id="3642657"/>
<dbReference type="KEGG" id="cal:CAALFM_C501200WA"/>
<dbReference type="CGD" id="CAL0000194527">
    <property type="gene designation" value="orf19.9506"/>
</dbReference>
<dbReference type="VEuPathDB" id="FungiDB:C5_01200W_A"/>
<dbReference type="eggNOG" id="ENOG502S60W">
    <property type="taxonomic scope" value="Eukaryota"/>
</dbReference>
<dbReference type="HOGENOM" id="CLU_054419_1_2_1"/>
<dbReference type="InParanoid" id="Q5A1V3"/>
<dbReference type="OrthoDB" id="2155246at2759"/>
<dbReference type="PRO" id="PR:Q5A1V3"/>
<dbReference type="Proteomes" id="UP000000559">
    <property type="component" value="Chromosome 5"/>
</dbReference>
<dbReference type="GO" id="GO:0005654">
    <property type="term" value="C:nucleoplasm"/>
    <property type="evidence" value="ECO:0000318"/>
    <property type="project" value="GO_Central"/>
</dbReference>
<dbReference type="GO" id="GO:0047407">
    <property type="term" value="F:ADP-ribosyl-[dinitrogen reductase] hydrolase activity"/>
    <property type="evidence" value="ECO:0000318"/>
    <property type="project" value="GO_Central"/>
</dbReference>
<dbReference type="GO" id="GO:0004721">
    <property type="term" value="F:phosphoprotein phosphatase activity"/>
    <property type="evidence" value="ECO:0007669"/>
    <property type="project" value="UniProtKB-KW"/>
</dbReference>
<dbReference type="GO" id="GO:0006974">
    <property type="term" value="P:DNA damage response"/>
    <property type="evidence" value="ECO:0000318"/>
    <property type="project" value="GO_Central"/>
</dbReference>
<dbReference type="GO" id="GO:0042278">
    <property type="term" value="P:purine nucleoside metabolic process"/>
    <property type="evidence" value="ECO:0000318"/>
    <property type="project" value="GO_Central"/>
</dbReference>
<dbReference type="CDD" id="cd02901">
    <property type="entry name" value="Macro_Poa1p-like"/>
    <property type="match status" value="1"/>
</dbReference>
<dbReference type="Gene3D" id="3.40.220.10">
    <property type="entry name" value="Leucine Aminopeptidase, subunit E, domain 1"/>
    <property type="match status" value="1"/>
</dbReference>
<dbReference type="InterPro" id="IPR050892">
    <property type="entry name" value="ADP-ribose_metab_enzymes"/>
</dbReference>
<dbReference type="InterPro" id="IPR002589">
    <property type="entry name" value="Macro_dom"/>
</dbReference>
<dbReference type="InterPro" id="IPR043472">
    <property type="entry name" value="Macro_dom-like"/>
</dbReference>
<dbReference type="PANTHER" id="PTHR12521:SF0">
    <property type="entry name" value="ADP-RIBOSE GLYCOHYDROLASE OARD1"/>
    <property type="match status" value="1"/>
</dbReference>
<dbReference type="PANTHER" id="PTHR12521">
    <property type="entry name" value="PROTEIN C6ORF130"/>
    <property type="match status" value="1"/>
</dbReference>
<dbReference type="Pfam" id="PF01661">
    <property type="entry name" value="Macro"/>
    <property type="match status" value="1"/>
</dbReference>
<dbReference type="SMART" id="SM00506">
    <property type="entry name" value="A1pp"/>
    <property type="match status" value="1"/>
</dbReference>
<dbReference type="SUPFAM" id="SSF52949">
    <property type="entry name" value="Macro domain-like"/>
    <property type="match status" value="1"/>
</dbReference>
<dbReference type="PROSITE" id="PS51154">
    <property type="entry name" value="MACRO"/>
    <property type="match status" value="1"/>
</dbReference>
<gene>
    <name type="primary">POA1</name>
    <name type="ordered locus">CAALFM_C501200WA</name>
    <name type="ORF">CaO19.1950</name>
    <name type="ORF">CaO19.9506</name>
</gene>
<protein>
    <recommendedName>
        <fullName>ADP-ribose 1''-phosphate phosphatase</fullName>
        <ecNumber>3.1.3.84</ecNumber>
    </recommendedName>
</protein>
<proteinExistence type="inferred from homology"/>
<name>POA1_CANAL</name>